<comment type="function">
    <text evidence="1">Peptide which can recruit, activate and subsequently lyse human neutrophils, thus eliminating the main cellular defense against infection.</text>
</comment>
<comment type="similarity">
    <text evidence="2">Belongs to the phenol-soluble modulin alpha peptides family.</text>
</comment>
<name>PSMA3_STAAT</name>
<protein>
    <recommendedName>
        <fullName>Phenol-soluble modulin alpha 3 peptide</fullName>
    </recommendedName>
</protein>
<gene>
    <name type="primary">psmA3</name>
    <name type="ordered locus">USA300HOU_0454.2</name>
</gene>
<feature type="peptide" id="PRO_0000345069" description="Phenol-soluble modulin alpha 3 peptide">
    <location>
        <begin position="1"/>
        <end position="22"/>
    </location>
</feature>
<dbReference type="EMBL" id="CP000730">
    <property type="status" value="NOT_ANNOTATED_CDS"/>
    <property type="molecule type" value="Genomic_DNA"/>
</dbReference>
<dbReference type="RefSeq" id="WP_014373779.1">
    <property type="nucleotide sequence ID" value="NC_010079.1"/>
</dbReference>
<dbReference type="SMR" id="P0C814"/>
<dbReference type="GO" id="GO:0031640">
    <property type="term" value="P:killing of cells of another organism"/>
    <property type="evidence" value="ECO:0007669"/>
    <property type="project" value="UniProtKB-KW"/>
</dbReference>
<dbReference type="InterPro" id="IPR031429">
    <property type="entry name" value="PSM_alpha"/>
</dbReference>
<dbReference type="InterPro" id="IPR053383">
    <property type="entry name" value="PSM_alpha_peptides"/>
</dbReference>
<dbReference type="NCBIfam" id="NF033426">
    <property type="entry name" value="PSM_alpha_3"/>
    <property type="match status" value="1"/>
</dbReference>
<dbReference type="Pfam" id="PF17063">
    <property type="entry name" value="PSMalpha"/>
    <property type="match status" value="1"/>
</dbReference>
<organism>
    <name type="scientific">Staphylococcus aureus (strain USA300 / TCH1516)</name>
    <dbReference type="NCBI Taxonomy" id="451516"/>
    <lineage>
        <taxon>Bacteria</taxon>
        <taxon>Bacillati</taxon>
        <taxon>Bacillota</taxon>
        <taxon>Bacilli</taxon>
        <taxon>Bacillales</taxon>
        <taxon>Staphylococcaceae</taxon>
        <taxon>Staphylococcus</taxon>
    </lineage>
</organism>
<keyword id="KW-0204">Cytolysis</keyword>
<keyword id="KW-0843">Virulence</keyword>
<evidence type="ECO:0000250" key="1">
    <source>
        <dbReference type="UniProtKB" id="A9JX07"/>
    </source>
</evidence>
<evidence type="ECO:0000305" key="2"/>
<sequence length="22" mass="2607">MEFVAKLFKFFKDLLGKFLGNN</sequence>
<proteinExistence type="inferred from homology"/>
<reference key="1">
    <citation type="journal article" date="2007" name="BMC Microbiol.">
        <title>Subtle genetic changes enhance virulence of methicillin resistant and sensitive Staphylococcus aureus.</title>
        <authorList>
            <person name="Highlander S.K."/>
            <person name="Hulten K.G."/>
            <person name="Qin X."/>
            <person name="Jiang H."/>
            <person name="Yerrapragada S."/>
            <person name="Mason E.O. Jr."/>
            <person name="Shang Y."/>
            <person name="Williams T.M."/>
            <person name="Fortunov R.M."/>
            <person name="Liu Y."/>
            <person name="Igboeli O."/>
            <person name="Petrosino J."/>
            <person name="Tirumalai M."/>
            <person name="Uzman A."/>
            <person name="Fox G.E."/>
            <person name="Cardenas A.M."/>
            <person name="Muzny D.M."/>
            <person name="Hemphill L."/>
            <person name="Ding Y."/>
            <person name="Dugan S."/>
            <person name="Blyth P.R."/>
            <person name="Buhay C.J."/>
            <person name="Dinh H.H."/>
            <person name="Hawes A.C."/>
            <person name="Holder M."/>
            <person name="Kovar C.L."/>
            <person name="Lee S.L."/>
            <person name="Liu W."/>
            <person name="Nazareth L.V."/>
            <person name="Wang Q."/>
            <person name="Zhou J."/>
            <person name="Kaplan S.L."/>
            <person name="Weinstock G.M."/>
        </authorList>
    </citation>
    <scope>NUCLEOTIDE SEQUENCE [LARGE SCALE GENOMIC DNA]</scope>
    <source>
        <strain>USA300 / TCH1516</strain>
    </source>
</reference>
<accession>P0C814</accession>